<proteinExistence type="evidence at transcript level"/>
<name>ZN331_PONAB</name>
<evidence type="ECO:0000250" key="1"/>
<evidence type="ECO:0000250" key="2">
    <source>
        <dbReference type="UniProtKB" id="Q9NQX6"/>
    </source>
</evidence>
<evidence type="ECO:0000255" key="3">
    <source>
        <dbReference type="PROSITE-ProRule" id="PRU00042"/>
    </source>
</evidence>
<evidence type="ECO:0000255" key="4">
    <source>
        <dbReference type="PROSITE-ProRule" id="PRU00119"/>
    </source>
</evidence>
<evidence type="ECO:0000305" key="5"/>
<sequence>MAQGLVTFADVAIDFSQEEWACLNSAQRDLYWDVMLENYSNLVSLDLESAYENKSLPTEKNIHEIRASKRNSDRRSKSLGRNWICEGMLERPQRSRGRYVNQMIINYVKRPATREGTPPRTHQRHHKENSFECKDCGKAFSRGYQLSQHQKIHTGEKPYECKECKKAFRWGNQLTQHQKIHTGEKPYECKDCGKAFRWGSSLVIHKRIHTGEKPYECKDCGKAFRRGDELTQHQRFHTGEKDYECKDCGKTFSRVYKLIQHKRIHSGEKPYECKDCGKAFICGSSLIQHKRIHTGEKPYECQECGKAFTRVNYLTQHQKIHTGEKPHECKECGKAFRWGSSLVKHERIHTGEKPYKCTECGKAFNCGYHLTQHERIHTGETPYKCKECGKAFIYGSSLVKHERIHTGVKPYGCTECGKSFSHGHQLTQHQKTHSGAKSYECKECGKACNHLNHLREHQRIHNS</sequence>
<organism>
    <name type="scientific">Pongo abelii</name>
    <name type="common">Sumatran orangutan</name>
    <name type="synonym">Pongo pygmaeus abelii</name>
    <dbReference type="NCBI Taxonomy" id="9601"/>
    <lineage>
        <taxon>Eukaryota</taxon>
        <taxon>Metazoa</taxon>
        <taxon>Chordata</taxon>
        <taxon>Craniata</taxon>
        <taxon>Vertebrata</taxon>
        <taxon>Euteleostomi</taxon>
        <taxon>Mammalia</taxon>
        <taxon>Eutheria</taxon>
        <taxon>Euarchontoglires</taxon>
        <taxon>Primates</taxon>
        <taxon>Haplorrhini</taxon>
        <taxon>Catarrhini</taxon>
        <taxon>Hominidae</taxon>
        <taxon>Pongo</taxon>
    </lineage>
</organism>
<accession>Q5REA0</accession>
<gene>
    <name type="primary">ZNF331</name>
</gene>
<dbReference type="EMBL" id="CR857633">
    <property type="protein sequence ID" value="CAH89907.1"/>
    <property type="molecule type" value="mRNA"/>
</dbReference>
<dbReference type="RefSeq" id="NP_001124893.1">
    <property type="nucleotide sequence ID" value="NM_001131421.1"/>
</dbReference>
<dbReference type="SMR" id="Q5REA0"/>
<dbReference type="STRING" id="9601.ENSPPYP00000011604"/>
<dbReference type="Ensembl" id="ENSPPYT00000012048.3">
    <property type="protein sequence ID" value="ENSPPYP00000011604.2"/>
    <property type="gene ID" value="ENSPPYG00000010360.3"/>
</dbReference>
<dbReference type="GeneID" id="100171759"/>
<dbReference type="KEGG" id="pon:100171759"/>
<dbReference type="CTD" id="55422"/>
<dbReference type="eggNOG" id="KOG1721">
    <property type="taxonomic scope" value="Eukaryota"/>
</dbReference>
<dbReference type="GeneTree" id="ENSGT00940000161267"/>
<dbReference type="HOGENOM" id="CLU_002678_44_0_1"/>
<dbReference type="InParanoid" id="Q5REA0"/>
<dbReference type="OMA" id="LDWMCEG"/>
<dbReference type="OrthoDB" id="6591996at2759"/>
<dbReference type="TreeFam" id="TF341817"/>
<dbReference type="Proteomes" id="UP000001595">
    <property type="component" value="Chromosome 19"/>
</dbReference>
<dbReference type="GO" id="GO:0005634">
    <property type="term" value="C:nucleus"/>
    <property type="evidence" value="ECO:0007669"/>
    <property type="project" value="UniProtKB-SubCell"/>
</dbReference>
<dbReference type="GO" id="GO:0003677">
    <property type="term" value="F:DNA binding"/>
    <property type="evidence" value="ECO:0007669"/>
    <property type="project" value="UniProtKB-KW"/>
</dbReference>
<dbReference type="GO" id="GO:0008270">
    <property type="term" value="F:zinc ion binding"/>
    <property type="evidence" value="ECO:0007669"/>
    <property type="project" value="UniProtKB-KW"/>
</dbReference>
<dbReference type="GO" id="GO:0006355">
    <property type="term" value="P:regulation of DNA-templated transcription"/>
    <property type="evidence" value="ECO:0007669"/>
    <property type="project" value="InterPro"/>
</dbReference>
<dbReference type="CDD" id="cd07765">
    <property type="entry name" value="KRAB_A-box"/>
    <property type="match status" value="1"/>
</dbReference>
<dbReference type="FunFam" id="3.30.160.60:FF:000020">
    <property type="entry name" value="Zinc finger protein 14 homolog"/>
    <property type="match status" value="1"/>
</dbReference>
<dbReference type="FunFam" id="3.30.160.60:FF:000770">
    <property type="entry name" value="zinc finger protein 16"/>
    <property type="match status" value="1"/>
</dbReference>
<dbReference type="FunFam" id="3.30.160.60:FF:001425">
    <property type="entry name" value="Zinc finger protein 331"/>
    <property type="match status" value="1"/>
</dbReference>
<dbReference type="FunFam" id="3.30.160.60:FF:000382">
    <property type="entry name" value="zinc finger protein 35 isoform X4"/>
    <property type="match status" value="1"/>
</dbReference>
<dbReference type="FunFam" id="3.30.160.60:FF:000016">
    <property type="entry name" value="zinc finger protein 37 homolog"/>
    <property type="match status" value="1"/>
</dbReference>
<dbReference type="FunFam" id="3.30.160.60:FF:000044">
    <property type="entry name" value="zinc finger protein 37 homolog"/>
    <property type="match status" value="1"/>
</dbReference>
<dbReference type="FunFam" id="3.30.160.60:FF:000338">
    <property type="entry name" value="zinc finger protein 383"/>
    <property type="match status" value="1"/>
</dbReference>
<dbReference type="FunFam" id="3.30.160.60:FF:002254">
    <property type="entry name" value="Zinc finger protein 540"/>
    <property type="match status" value="2"/>
</dbReference>
<dbReference type="FunFam" id="3.30.160.60:FF:000281">
    <property type="entry name" value="Zinc finger protein 558 isoform X1"/>
    <property type="match status" value="1"/>
</dbReference>
<dbReference type="FunFam" id="3.30.160.60:FF:001432">
    <property type="entry name" value="Zinc finger protein 571"/>
    <property type="match status" value="1"/>
</dbReference>
<dbReference type="FunFam" id="3.30.160.60:FF:001933">
    <property type="entry name" value="Zinc finger protein 870"/>
    <property type="match status" value="1"/>
</dbReference>
<dbReference type="Gene3D" id="6.10.140.140">
    <property type="match status" value="1"/>
</dbReference>
<dbReference type="Gene3D" id="3.30.160.60">
    <property type="entry name" value="Classic Zinc Finger"/>
    <property type="match status" value="12"/>
</dbReference>
<dbReference type="InterPro" id="IPR001909">
    <property type="entry name" value="KRAB"/>
</dbReference>
<dbReference type="InterPro" id="IPR036051">
    <property type="entry name" value="KRAB_dom_sf"/>
</dbReference>
<dbReference type="InterPro" id="IPR050758">
    <property type="entry name" value="Znf_C2H2-type"/>
</dbReference>
<dbReference type="InterPro" id="IPR036236">
    <property type="entry name" value="Znf_C2H2_sf"/>
</dbReference>
<dbReference type="InterPro" id="IPR013087">
    <property type="entry name" value="Znf_C2H2_type"/>
</dbReference>
<dbReference type="PANTHER" id="PTHR23234:SF10">
    <property type="entry name" value="RIKEN CDNA 6720489N17 GENE-RELATED"/>
    <property type="match status" value="1"/>
</dbReference>
<dbReference type="PANTHER" id="PTHR23234">
    <property type="entry name" value="ZNF44 PROTEIN"/>
    <property type="match status" value="1"/>
</dbReference>
<dbReference type="Pfam" id="PF01352">
    <property type="entry name" value="KRAB"/>
    <property type="match status" value="1"/>
</dbReference>
<dbReference type="Pfam" id="PF00096">
    <property type="entry name" value="zf-C2H2"/>
    <property type="match status" value="10"/>
</dbReference>
<dbReference type="Pfam" id="PF13912">
    <property type="entry name" value="zf-C2H2_6"/>
    <property type="match status" value="2"/>
</dbReference>
<dbReference type="SMART" id="SM00349">
    <property type="entry name" value="KRAB"/>
    <property type="match status" value="1"/>
</dbReference>
<dbReference type="SMART" id="SM00355">
    <property type="entry name" value="ZnF_C2H2"/>
    <property type="match status" value="12"/>
</dbReference>
<dbReference type="SUPFAM" id="SSF57667">
    <property type="entry name" value="beta-beta-alpha zinc fingers"/>
    <property type="match status" value="7"/>
</dbReference>
<dbReference type="SUPFAM" id="SSF109640">
    <property type="entry name" value="KRAB domain (Kruppel-associated box)"/>
    <property type="match status" value="1"/>
</dbReference>
<dbReference type="PROSITE" id="PS50805">
    <property type="entry name" value="KRAB"/>
    <property type="match status" value="1"/>
</dbReference>
<dbReference type="PROSITE" id="PS00028">
    <property type="entry name" value="ZINC_FINGER_C2H2_1"/>
    <property type="match status" value="12"/>
</dbReference>
<dbReference type="PROSITE" id="PS50157">
    <property type="entry name" value="ZINC_FINGER_C2H2_2"/>
    <property type="match status" value="12"/>
</dbReference>
<protein>
    <recommendedName>
        <fullName>Zinc finger protein 331</fullName>
    </recommendedName>
</protein>
<feature type="chain" id="PRO_0000289999" description="Zinc finger protein 331">
    <location>
        <begin position="1"/>
        <end position="463"/>
    </location>
</feature>
<feature type="domain" description="KRAB" evidence="4">
    <location>
        <begin position="6"/>
        <end position="78"/>
    </location>
</feature>
<feature type="zinc finger region" description="C2H2-type 1" evidence="3">
    <location>
        <begin position="131"/>
        <end position="153"/>
    </location>
</feature>
<feature type="zinc finger region" description="C2H2-type 2" evidence="3">
    <location>
        <begin position="159"/>
        <end position="181"/>
    </location>
</feature>
<feature type="zinc finger region" description="C2H2-type 3" evidence="3">
    <location>
        <begin position="187"/>
        <end position="209"/>
    </location>
</feature>
<feature type="zinc finger region" description="C2H2-type 4" evidence="3">
    <location>
        <begin position="215"/>
        <end position="237"/>
    </location>
</feature>
<feature type="zinc finger region" description="C2H2-type 5" evidence="3">
    <location>
        <begin position="243"/>
        <end position="265"/>
    </location>
</feature>
<feature type="zinc finger region" description="C2H2-type 6" evidence="3">
    <location>
        <begin position="271"/>
        <end position="293"/>
    </location>
</feature>
<feature type="zinc finger region" description="C2H2-type 7" evidence="3">
    <location>
        <begin position="299"/>
        <end position="321"/>
    </location>
</feature>
<feature type="zinc finger region" description="C2H2-type 8" evidence="3">
    <location>
        <begin position="327"/>
        <end position="349"/>
    </location>
</feature>
<feature type="zinc finger region" description="C2H2-type 9" evidence="3">
    <location>
        <begin position="355"/>
        <end position="377"/>
    </location>
</feature>
<feature type="zinc finger region" description="C2H2-type 10" evidence="3">
    <location>
        <begin position="383"/>
        <end position="405"/>
    </location>
</feature>
<feature type="zinc finger region" description="C2H2-type 11" evidence="3">
    <location>
        <begin position="411"/>
        <end position="433"/>
    </location>
</feature>
<feature type="zinc finger region" description="C2H2-type 12" evidence="3">
    <location>
        <begin position="439"/>
        <end position="461"/>
    </location>
</feature>
<feature type="cross-link" description="Glycyl lysine isopeptide (Lys-Gly) (interchain with G-Cter in SUMO2)" evidence="2">
    <location>
        <position position="109"/>
    </location>
</feature>
<feature type="cross-link" description="Glycyl lysine isopeptide (Lys-Gly) (interchain with G-Cter in SUMO2)" evidence="2">
    <location>
        <position position="400"/>
    </location>
</feature>
<keyword id="KW-0238">DNA-binding</keyword>
<keyword id="KW-1017">Isopeptide bond</keyword>
<keyword id="KW-0479">Metal-binding</keyword>
<keyword id="KW-0539">Nucleus</keyword>
<keyword id="KW-1185">Reference proteome</keyword>
<keyword id="KW-0677">Repeat</keyword>
<keyword id="KW-0804">Transcription</keyword>
<keyword id="KW-0805">Transcription regulation</keyword>
<keyword id="KW-0832">Ubl conjugation</keyword>
<keyword id="KW-0862">Zinc</keyword>
<keyword id="KW-0863">Zinc-finger</keyword>
<reference key="1">
    <citation type="submission" date="2004-11" db="EMBL/GenBank/DDBJ databases">
        <authorList>
            <consortium name="The German cDNA consortium"/>
        </authorList>
    </citation>
    <scope>NUCLEOTIDE SEQUENCE [LARGE SCALE MRNA]</scope>
    <source>
        <tissue>Brain cortex</tissue>
    </source>
</reference>
<comment type="function">
    <text evidence="1">May be involved in transcriptional regulation. May play a role in spermatogenesis (By similarity).</text>
</comment>
<comment type="subcellular location">
    <subcellularLocation>
        <location evidence="5">Nucleus</location>
    </subcellularLocation>
</comment>
<comment type="similarity">
    <text evidence="5">Belongs to the krueppel C2H2-type zinc-finger protein family.</text>
</comment>